<evidence type="ECO:0000255" key="1">
    <source>
        <dbReference type="HAMAP-Rule" id="MF_00323"/>
    </source>
</evidence>
<evidence type="ECO:0000305" key="2"/>
<name>CPFC_HALH5</name>
<keyword id="KW-0963">Cytoplasm</keyword>
<keyword id="KW-0350">Heme biosynthesis</keyword>
<keyword id="KW-0408">Iron</keyword>
<keyword id="KW-0456">Lyase</keyword>
<keyword id="KW-0479">Metal-binding</keyword>
<keyword id="KW-0627">Porphyrin biosynthesis</keyword>
<keyword id="KW-1185">Reference proteome</keyword>
<gene>
    <name evidence="1" type="primary">cpfC</name>
    <name type="synonym">hemH</name>
    <name type="ordered locus">BH1203</name>
</gene>
<sequence>MTKKKIGLLVMAYGTPRTKEEIEPYYTHIRHGRKPSQELLDDLTERYEAIGGVSPLAKITDDQAIALEQKLNELYDDIEFKSYLGLKHIDPFIEDAVEQMKEDGVQEAVSIVLAPHFSTFSVKSYNGRAHEESKKIGGPRIQSVESWYDEPLFIQYWVDQVNDTMAKIEDKDKACVIFSAHSLPEKIVDYGDPYPQQLKETADLIAKGAGITNYAVGWQSEGNTPEPWLGPDVQDLTRDLYETHGYTSMIYCPVGFVADHLEVLYDNDYECKVVTDELGIDYYRPEMPNAKPEFIDCLATVIQKKLAEKE</sequence>
<feature type="chain" id="PRO_0000175110" description="Coproporphyrin III ferrochelatase">
    <location>
        <begin position="1"/>
        <end position="310"/>
    </location>
</feature>
<feature type="binding site" description="axial binding residue" evidence="1">
    <location>
        <position position="13"/>
    </location>
    <ligand>
        <name>Fe-coproporphyrin III</name>
        <dbReference type="ChEBI" id="CHEBI:68438"/>
    </ligand>
    <ligandPart>
        <name>Fe</name>
        <dbReference type="ChEBI" id="CHEBI:18248"/>
    </ligandPart>
</feature>
<feature type="binding site" evidence="1">
    <location>
        <position position="30"/>
    </location>
    <ligand>
        <name>Fe-coproporphyrin III</name>
        <dbReference type="ChEBI" id="CHEBI:68438"/>
    </ligand>
</feature>
<feature type="binding site" evidence="1">
    <location>
        <begin position="46"/>
        <end position="47"/>
    </location>
    <ligand>
        <name>Fe-coproporphyrin III</name>
        <dbReference type="ChEBI" id="CHEBI:68438"/>
    </ligand>
</feature>
<feature type="binding site" evidence="1">
    <location>
        <position position="54"/>
    </location>
    <ligand>
        <name>Fe-coproporphyrin III</name>
        <dbReference type="ChEBI" id="CHEBI:68438"/>
    </ligand>
</feature>
<feature type="binding site" evidence="1">
    <location>
        <position position="125"/>
    </location>
    <ligand>
        <name>Fe-coproporphyrin III</name>
        <dbReference type="ChEBI" id="CHEBI:68438"/>
    </ligand>
</feature>
<feature type="binding site" evidence="1">
    <location>
        <position position="181"/>
    </location>
    <ligand>
        <name>Fe(2+)</name>
        <dbReference type="ChEBI" id="CHEBI:29033"/>
    </ligand>
</feature>
<feature type="binding site" evidence="1">
    <location>
        <position position="262"/>
    </location>
    <ligand>
        <name>Fe(2+)</name>
        <dbReference type="ChEBI" id="CHEBI:29033"/>
    </ligand>
</feature>
<accession>Q9KDK9</accession>
<reference key="1">
    <citation type="journal article" date="2000" name="Nucleic Acids Res.">
        <title>Complete genome sequence of the alkaliphilic bacterium Bacillus halodurans and genomic sequence comparison with Bacillus subtilis.</title>
        <authorList>
            <person name="Takami H."/>
            <person name="Nakasone K."/>
            <person name="Takaki Y."/>
            <person name="Maeno G."/>
            <person name="Sasaki R."/>
            <person name="Masui N."/>
            <person name="Fuji F."/>
            <person name="Hirama C."/>
            <person name="Nakamura Y."/>
            <person name="Ogasawara N."/>
            <person name="Kuhara S."/>
            <person name="Horikoshi K."/>
        </authorList>
    </citation>
    <scope>NUCLEOTIDE SEQUENCE [LARGE SCALE GENOMIC DNA]</scope>
    <source>
        <strain>ATCC BAA-125 / DSM 18197 / FERM 7344 / JCM 9153 / C-125</strain>
    </source>
</reference>
<organism>
    <name type="scientific">Halalkalibacterium halodurans (strain ATCC BAA-125 / DSM 18197 / FERM 7344 / JCM 9153 / C-125)</name>
    <name type="common">Bacillus halodurans</name>
    <dbReference type="NCBI Taxonomy" id="272558"/>
    <lineage>
        <taxon>Bacteria</taxon>
        <taxon>Bacillati</taxon>
        <taxon>Bacillota</taxon>
        <taxon>Bacilli</taxon>
        <taxon>Bacillales</taxon>
        <taxon>Bacillaceae</taxon>
        <taxon>Halalkalibacterium (ex Joshi et al. 2022)</taxon>
    </lineage>
</organism>
<protein>
    <recommendedName>
        <fullName evidence="1">Coproporphyrin III ferrochelatase</fullName>
        <ecNumber evidence="1">4.99.1.9</ecNumber>
    </recommendedName>
</protein>
<dbReference type="EC" id="4.99.1.9" evidence="1"/>
<dbReference type="EMBL" id="BA000004">
    <property type="protein sequence ID" value="BAB04922.1"/>
    <property type="molecule type" value="Genomic_DNA"/>
</dbReference>
<dbReference type="PIR" id="C83800">
    <property type="entry name" value="C83800"/>
</dbReference>
<dbReference type="RefSeq" id="WP_010897372.1">
    <property type="nucleotide sequence ID" value="NC_002570.2"/>
</dbReference>
<dbReference type="SMR" id="Q9KDK9"/>
<dbReference type="STRING" id="272558.gene:10727097"/>
<dbReference type="KEGG" id="bha:BH1203"/>
<dbReference type="eggNOG" id="COG0276">
    <property type="taxonomic scope" value="Bacteria"/>
</dbReference>
<dbReference type="HOGENOM" id="CLU_018884_2_1_9"/>
<dbReference type="OrthoDB" id="9776380at2"/>
<dbReference type="UniPathway" id="UPA00252"/>
<dbReference type="Proteomes" id="UP000001258">
    <property type="component" value="Chromosome"/>
</dbReference>
<dbReference type="GO" id="GO:0005737">
    <property type="term" value="C:cytoplasm"/>
    <property type="evidence" value="ECO:0007669"/>
    <property type="project" value="UniProtKB-SubCell"/>
</dbReference>
<dbReference type="GO" id="GO:0004325">
    <property type="term" value="F:ferrochelatase activity"/>
    <property type="evidence" value="ECO:0007669"/>
    <property type="project" value="UniProtKB-UniRule"/>
</dbReference>
<dbReference type="GO" id="GO:0046872">
    <property type="term" value="F:metal ion binding"/>
    <property type="evidence" value="ECO:0007669"/>
    <property type="project" value="UniProtKB-KW"/>
</dbReference>
<dbReference type="GO" id="GO:0006783">
    <property type="term" value="P:heme biosynthetic process"/>
    <property type="evidence" value="ECO:0007669"/>
    <property type="project" value="UniProtKB-UniRule"/>
</dbReference>
<dbReference type="CDD" id="cd00419">
    <property type="entry name" value="Ferrochelatase_C"/>
    <property type="match status" value="1"/>
</dbReference>
<dbReference type="CDD" id="cd03411">
    <property type="entry name" value="Ferrochelatase_N"/>
    <property type="match status" value="1"/>
</dbReference>
<dbReference type="FunFam" id="3.40.50.1400:FF:000009">
    <property type="entry name" value="Ferrochelatase"/>
    <property type="match status" value="1"/>
</dbReference>
<dbReference type="Gene3D" id="3.40.50.1400">
    <property type="match status" value="2"/>
</dbReference>
<dbReference type="HAMAP" id="MF_00323">
    <property type="entry name" value="Ferrochelatase"/>
    <property type="match status" value="1"/>
</dbReference>
<dbReference type="InterPro" id="IPR001015">
    <property type="entry name" value="Ferrochelatase"/>
</dbReference>
<dbReference type="InterPro" id="IPR019772">
    <property type="entry name" value="Ferrochelatase_AS"/>
</dbReference>
<dbReference type="InterPro" id="IPR033644">
    <property type="entry name" value="Ferrochelatase_C"/>
</dbReference>
<dbReference type="InterPro" id="IPR033659">
    <property type="entry name" value="Ferrochelatase_N"/>
</dbReference>
<dbReference type="NCBIfam" id="TIGR00109">
    <property type="entry name" value="hemH"/>
    <property type="match status" value="1"/>
</dbReference>
<dbReference type="NCBIfam" id="NF009095">
    <property type="entry name" value="PRK12435.1"/>
    <property type="match status" value="1"/>
</dbReference>
<dbReference type="PANTHER" id="PTHR11108">
    <property type="entry name" value="FERROCHELATASE"/>
    <property type="match status" value="1"/>
</dbReference>
<dbReference type="PANTHER" id="PTHR11108:SF1">
    <property type="entry name" value="FERROCHELATASE, MITOCHONDRIAL"/>
    <property type="match status" value="1"/>
</dbReference>
<dbReference type="Pfam" id="PF00762">
    <property type="entry name" value="Ferrochelatase"/>
    <property type="match status" value="1"/>
</dbReference>
<dbReference type="SUPFAM" id="SSF53800">
    <property type="entry name" value="Chelatase"/>
    <property type="match status" value="1"/>
</dbReference>
<dbReference type="PROSITE" id="PS00534">
    <property type="entry name" value="FERROCHELATASE"/>
    <property type="match status" value="1"/>
</dbReference>
<proteinExistence type="inferred from homology"/>
<comment type="function">
    <text evidence="1">Involved in coproporphyrin-dependent heme b biosynthesis. Catalyzes the insertion of ferrous iron into coproporphyrin III to form Fe-coproporphyrin III.</text>
</comment>
<comment type="catalytic activity">
    <reaction evidence="1">
        <text>Fe-coproporphyrin III + 2 H(+) = coproporphyrin III + Fe(2+)</text>
        <dbReference type="Rhea" id="RHEA:49572"/>
        <dbReference type="ChEBI" id="CHEBI:15378"/>
        <dbReference type="ChEBI" id="CHEBI:29033"/>
        <dbReference type="ChEBI" id="CHEBI:68438"/>
        <dbReference type="ChEBI" id="CHEBI:131725"/>
        <dbReference type="EC" id="4.99.1.9"/>
    </reaction>
    <physiologicalReaction direction="right-to-left" evidence="1">
        <dbReference type="Rhea" id="RHEA:49574"/>
    </physiologicalReaction>
</comment>
<comment type="pathway">
    <text evidence="1">Porphyrin-containing compound metabolism; protoheme biosynthesis.</text>
</comment>
<comment type="subcellular location">
    <subcellularLocation>
        <location evidence="1">Cytoplasm</location>
    </subcellularLocation>
</comment>
<comment type="similarity">
    <text evidence="1 2">Belongs to the ferrochelatase family.</text>
</comment>